<name>CMR1_ASPFC</name>
<feature type="chain" id="PRO_0000351098" description="DNA damage-binding protein cmr1">
    <location>
        <begin position="1"/>
        <end position="528"/>
    </location>
</feature>
<feature type="repeat" description="WD 1" evidence="2">
    <location>
        <begin position="185"/>
        <end position="226"/>
    </location>
</feature>
<feature type="repeat" description="WD 2" evidence="2">
    <location>
        <begin position="250"/>
        <end position="290"/>
    </location>
</feature>
<feature type="repeat" description="WD 3" evidence="2">
    <location>
        <begin position="297"/>
        <end position="337"/>
    </location>
</feature>
<feature type="repeat" description="WD 4" evidence="2">
    <location>
        <begin position="342"/>
        <end position="382"/>
    </location>
</feature>
<feature type="repeat" description="WD 5" evidence="2">
    <location>
        <begin position="389"/>
        <end position="428"/>
    </location>
</feature>
<feature type="repeat" description="WD 6" evidence="2">
    <location>
        <begin position="451"/>
        <end position="494"/>
    </location>
</feature>
<feature type="repeat" description="WD 7" evidence="2">
    <location>
        <begin position="497"/>
        <end position="528"/>
    </location>
</feature>
<feature type="region of interest" description="Disordered" evidence="3">
    <location>
        <begin position="32"/>
        <end position="98"/>
    </location>
</feature>
<feature type="region of interest" description="Disordered" evidence="3">
    <location>
        <begin position="217"/>
        <end position="243"/>
    </location>
</feature>
<feature type="compositionally biased region" description="Basic residues" evidence="3">
    <location>
        <begin position="52"/>
        <end position="62"/>
    </location>
</feature>
<feature type="compositionally biased region" description="Acidic residues" evidence="3">
    <location>
        <begin position="230"/>
        <end position="242"/>
    </location>
</feature>
<gene>
    <name type="ORF">AFUB_078330</name>
</gene>
<keyword id="KW-0227">DNA damage</keyword>
<keyword id="KW-0238">DNA-binding</keyword>
<keyword id="KW-0677">Repeat</keyword>
<keyword id="KW-0853">WD repeat</keyword>
<evidence type="ECO:0000250" key="1">
    <source>
        <dbReference type="UniProtKB" id="Q12510"/>
    </source>
</evidence>
<evidence type="ECO:0000255" key="2"/>
<evidence type="ECO:0000256" key="3">
    <source>
        <dbReference type="SAM" id="MobiDB-lite"/>
    </source>
</evidence>
<evidence type="ECO:0000305" key="4"/>
<protein>
    <recommendedName>
        <fullName evidence="1">DNA damage-binding protein cmr1</fullName>
    </recommendedName>
</protein>
<organism>
    <name type="scientific">Aspergillus fumigatus (strain CBS 144.89 / FGSC A1163 / CEA10)</name>
    <name type="common">Neosartorya fumigata</name>
    <dbReference type="NCBI Taxonomy" id="451804"/>
    <lineage>
        <taxon>Eukaryota</taxon>
        <taxon>Fungi</taxon>
        <taxon>Dikarya</taxon>
        <taxon>Ascomycota</taxon>
        <taxon>Pezizomycotina</taxon>
        <taxon>Eurotiomycetes</taxon>
        <taxon>Eurotiomycetidae</taxon>
        <taxon>Eurotiales</taxon>
        <taxon>Aspergillaceae</taxon>
        <taxon>Aspergillus</taxon>
        <taxon>Aspergillus subgen. Fumigati</taxon>
    </lineage>
</organism>
<sequence length="528" mass="58521">MGADNELSEFEKQRLANIAERDALLKKLSLDAQSSGLFPPKSARSSPGGQTKPKKKPPPKKVKKEDEHPVPRRMSSRLRGLAADSEVAKRKADEQYEAAQQAERAKRVRKSDAFSFSEMLVSGQKLSGDSLIGVDVVTKGVAMPYQRTFGDEDIKKTTDKELKALREEMSGLRLWEAWEPNRIKLTPERIYTMTFHPSEAKPLIFAGDKMGNLGVLDASQEKPTSAVKQEDDEEDAEDDDPDPVLTTLKPHTRTISSLHIHPSKPTHLYSASYDSSIRELDLEKTTSVEKYAPESTSDDIPISGIDMAPDDPNTLYWTTLDGAFGRYDTRASRRSAVATWQLSEKKIGGFSLFPTHPHFFATASLDRTMRLWDIRKLSHDDPVPVGEHVSRLSVSHAAFNSAGQIATSSYDDTLKIYDFGSKGIAAWEPGYTLSDAEMKPDTIVRHNCQTGRWVTILRPQWQANPQSSIQRFCIGNMNRFVDVYSSSGDQLAQLGGDGITAVPAVAVFHCSTNWIAGGTASGKICLWM</sequence>
<dbReference type="EMBL" id="DS499599">
    <property type="protein sequence ID" value="EDP49801.1"/>
    <property type="molecule type" value="Genomic_DNA"/>
</dbReference>
<dbReference type="EnsemblFungi" id="EDP49801">
    <property type="protein sequence ID" value="EDP49801"/>
    <property type="gene ID" value="AFUB_078330"/>
</dbReference>
<dbReference type="VEuPathDB" id="FungiDB:AFUB_078330"/>
<dbReference type="HOGENOM" id="CLU_017019_1_1_1"/>
<dbReference type="OrthoDB" id="106151at5052"/>
<dbReference type="PhylomeDB" id="B0Y8S0"/>
<dbReference type="Proteomes" id="UP000001699">
    <property type="component" value="Unassembled WGS sequence"/>
</dbReference>
<dbReference type="GO" id="GO:0000785">
    <property type="term" value="C:chromatin"/>
    <property type="evidence" value="ECO:0007669"/>
    <property type="project" value="EnsemblFungi"/>
</dbReference>
<dbReference type="GO" id="GO:0005737">
    <property type="term" value="C:cytoplasm"/>
    <property type="evidence" value="ECO:0007669"/>
    <property type="project" value="EnsemblFungi"/>
</dbReference>
<dbReference type="GO" id="GO:0034399">
    <property type="term" value="C:nuclear periphery"/>
    <property type="evidence" value="ECO:0007669"/>
    <property type="project" value="EnsemblFungi"/>
</dbReference>
<dbReference type="GO" id="GO:0003677">
    <property type="term" value="F:DNA binding"/>
    <property type="evidence" value="ECO:0007669"/>
    <property type="project" value="UniProtKB-KW"/>
</dbReference>
<dbReference type="GO" id="GO:0006974">
    <property type="term" value="P:DNA damage response"/>
    <property type="evidence" value="ECO:0007669"/>
    <property type="project" value="UniProtKB-KW"/>
</dbReference>
<dbReference type="GO" id="GO:2000001">
    <property type="term" value="P:regulation of DNA damage checkpoint"/>
    <property type="evidence" value="ECO:0007669"/>
    <property type="project" value="EnsemblFungi"/>
</dbReference>
<dbReference type="FunFam" id="2.130.10.10:FF:000562">
    <property type="entry name" value="DNA damage-binding protein CMR1"/>
    <property type="match status" value="1"/>
</dbReference>
<dbReference type="Gene3D" id="2.130.10.10">
    <property type="entry name" value="YVTN repeat-like/Quinoprotein amine dehydrogenase"/>
    <property type="match status" value="1"/>
</dbReference>
<dbReference type="InterPro" id="IPR015943">
    <property type="entry name" value="WD40/YVTN_repeat-like_dom_sf"/>
</dbReference>
<dbReference type="InterPro" id="IPR036322">
    <property type="entry name" value="WD40_repeat_dom_sf"/>
</dbReference>
<dbReference type="InterPro" id="IPR001680">
    <property type="entry name" value="WD40_rpt"/>
</dbReference>
<dbReference type="InterPro" id="IPR050853">
    <property type="entry name" value="WD_repeat_DNA-damage-binding"/>
</dbReference>
<dbReference type="PANTHER" id="PTHR14773">
    <property type="entry name" value="WD REPEAT-CONTAINING PROTEIN 76"/>
    <property type="match status" value="1"/>
</dbReference>
<dbReference type="PANTHER" id="PTHR14773:SF0">
    <property type="entry name" value="WD REPEAT-CONTAINING PROTEIN 76"/>
    <property type="match status" value="1"/>
</dbReference>
<dbReference type="Pfam" id="PF00400">
    <property type="entry name" value="WD40"/>
    <property type="match status" value="3"/>
</dbReference>
<dbReference type="SMART" id="SM00320">
    <property type="entry name" value="WD40"/>
    <property type="match status" value="4"/>
</dbReference>
<dbReference type="SUPFAM" id="SSF50978">
    <property type="entry name" value="WD40 repeat-like"/>
    <property type="match status" value="1"/>
</dbReference>
<dbReference type="PROSITE" id="PS50082">
    <property type="entry name" value="WD_REPEATS_2"/>
    <property type="match status" value="1"/>
</dbReference>
<dbReference type="PROSITE" id="PS50294">
    <property type="entry name" value="WD_REPEATS_REGION"/>
    <property type="match status" value="1"/>
</dbReference>
<comment type="function">
    <text evidence="1">DNA-binding protein that binds to both single- and double-stranded DNA. Binds preferentially to UV-damaged DNA. May be involved in DNA-metabolic processes.</text>
</comment>
<comment type="similarity">
    <text evidence="4">Belongs to the WD repeat DDB2/WDR76 family.</text>
</comment>
<reference key="1">
    <citation type="journal article" date="2008" name="PLoS Genet.">
        <title>Genomic islands in the pathogenic filamentous fungus Aspergillus fumigatus.</title>
        <authorList>
            <person name="Fedorova N.D."/>
            <person name="Khaldi N."/>
            <person name="Joardar V.S."/>
            <person name="Maiti R."/>
            <person name="Amedeo P."/>
            <person name="Anderson M.J."/>
            <person name="Crabtree J."/>
            <person name="Silva J.C."/>
            <person name="Badger J.H."/>
            <person name="Albarraq A."/>
            <person name="Angiuoli S."/>
            <person name="Bussey H."/>
            <person name="Bowyer P."/>
            <person name="Cotty P.J."/>
            <person name="Dyer P.S."/>
            <person name="Egan A."/>
            <person name="Galens K."/>
            <person name="Fraser-Liggett C.M."/>
            <person name="Haas B.J."/>
            <person name="Inman J.M."/>
            <person name="Kent R."/>
            <person name="Lemieux S."/>
            <person name="Malavazi I."/>
            <person name="Orvis J."/>
            <person name="Roemer T."/>
            <person name="Ronning C.M."/>
            <person name="Sundaram J.P."/>
            <person name="Sutton G."/>
            <person name="Turner G."/>
            <person name="Venter J.C."/>
            <person name="White O.R."/>
            <person name="Whitty B.R."/>
            <person name="Youngman P."/>
            <person name="Wolfe K.H."/>
            <person name="Goldman G.H."/>
            <person name="Wortman J.R."/>
            <person name="Jiang B."/>
            <person name="Denning D.W."/>
            <person name="Nierman W.C."/>
        </authorList>
    </citation>
    <scope>NUCLEOTIDE SEQUENCE [LARGE SCALE GENOMIC DNA]</scope>
    <source>
        <strain>CBS 144.89 / FGSC A1163 / CEA10</strain>
    </source>
</reference>
<proteinExistence type="inferred from homology"/>
<accession>B0Y8S0</accession>